<name>DGCN_ECOLI</name>
<gene>
    <name evidence="10" type="primary">dgcN</name>
    <name type="synonym">yfiN</name>
    <name type="ordered locus">b2604</name>
    <name type="ordered locus">JW2585</name>
</gene>
<organism>
    <name type="scientific">Escherichia coli (strain K12)</name>
    <dbReference type="NCBI Taxonomy" id="83333"/>
    <lineage>
        <taxon>Bacteria</taxon>
        <taxon>Pseudomonadati</taxon>
        <taxon>Pseudomonadota</taxon>
        <taxon>Gammaproteobacteria</taxon>
        <taxon>Enterobacterales</taxon>
        <taxon>Enterobacteriaceae</taxon>
        <taxon>Escherichia</taxon>
    </lineage>
</organism>
<accession>P46139</accession>
<accession>P76598</accession>
<accession>P77005</accession>
<sequence>MMDNDNSLNKRPTFKRALRNISMTSIFITMMLIWLLLSVTSVLTLKQYAQKNLALTAATMTYSLEAAVVFADGPAATETLAALGQQGQFSTAEVRDKQQNILASWHYTRKDPGDTFSNFISHWLFPAPIIQPIRHNGETIGEVRLTARDSSISHFIWFSLAVLTGCILLASGIAITLTRHLHNGLVEALKNITDVVHDVRSNRNFSRRVSEERIAEFHRFALDFNSLLDEMEEWQLRLQAKNAQLLRTALHDPLTGLANRAAFRSGINTLMNNSDARKTSALLFLDGDNFKYINDTWGHATGDRVLIEIAKRLAEFGGLRHKAYRLGGDEFAMVLYDVQSESEVQQICSALTQIFNLPFDLHNGHQTTMTLSIGYAMTIEHASAEKLQELADHNMYQAKHQRAEKLVR</sequence>
<protein>
    <recommendedName>
        <fullName evidence="11">Diguanylate cyclase DgcN</fullName>
        <shortName evidence="11">DGC</shortName>
        <ecNumber evidence="9">2.7.7.65</ecNumber>
    </recommendedName>
</protein>
<comment type="function">
    <text evidence="7 9">Bifunctional protein that catalyzes the synthesis of cyclic-di-GMP (c-di-GMP) in response to reductive stress and then dynamically relocates to the division site to arrest cell division in response to envelope stress. In the presence of high intracellular c-di-GMP levels, and in response to envelope stress, interacts with cell division proteins and halts cell division, without disassembling the Z ring, but by blocking its further progress toward cytokinesis (PubMed:27507823). Part of a network that regulates cell motility by altering levels of c-di-GMP (PubMed:20303158).</text>
</comment>
<comment type="catalytic activity">
    <reaction evidence="9">
        <text>2 GTP = 3',3'-c-di-GMP + 2 diphosphate</text>
        <dbReference type="Rhea" id="RHEA:24898"/>
        <dbReference type="ChEBI" id="CHEBI:33019"/>
        <dbReference type="ChEBI" id="CHEBI:37565"/>
        <dbReference type="ChEBI" id="CHEBI:58805"/>
        <dbReference type="EC" id="2.7.7.65"/>
    </reaction>
</comment>
<comment type="cofactor">
    <cofactor evidence="1">
        <name>Mg(2+)</name>
        <dbReference type="ChEBI" id="CHEBI:18420"/>
    </cofactor>
    <text evidence="1">Binds 1 Mg(2+) ion per monomer.</text>
</comment>
<comment type="activity regulation">
    <text evidence="9">Inhibited by YfiR, which prevents relocation to the midcell. A reductive stress signal is required to inactivate YfiR and turn on the DGC activity of DgcN.</text>
</comment>
<comment type="pathway">
    <text evidence="11">Purine metabolism; 3',5'-cyclic di-GMP biosynthesis.</text>
</comment>
<comment type="subunit">
    <text evidence="9 13">Homodimer (Probable). Interacts with the cell division proteins FtsZ and ZipA (PubMed:27507823).</text>
</comment>
<comment type="subcellular location">
    <subcellularLocation>
        <location evidence="5">Cell inner membrane</location>
        <topology evidence="2">Multi-pass membrane protein</topology>
    </subcellularLocation>
    <text evidence="9">Localizes to the midcell in a Z ring-dependent manner in response to cell envelope stress.</text>
</comment>
<comment type="induction">
    <text evidence="6">Expressed at low levels at both 28 and 37 degrees Celsius during transition into stationary phase.</text>
</comment>
<comment type="disruption phenotype">
    <text evidence="7 8">Deletion of the gene increases swimming motility and early biofilm formation (PubMed:21181144). Disruption partially suppresses the reduced motility of a pdeH disruption; concomitant disruption of dosC, dgcE, dgcQ and dgcN completely restores motility, suggesting these 4 genes, together with the c-di-GMP phosphodiesterase PdeH, form a network that regulates cell motility by altering levels of c-di-GMP (PubMed:20303158).</text>
</comment>
<evidence type="ECO:0000250" key="1">
    <source>
        <dbReference type="UniProtKB" id="P31129"/>
    </source>
</evidence>
<evidence type="ECO:0000255" key="2"/>
<evidence type="ECO:0000255" key="3">
    <source>
        <dbReference type="PROSITE-ProRule" id="PRU00095"/>
    </source>
</evidence>
<evidence type="ECO:0000255" key="4">
    <source>
        <dbReference type="PROSITE-ProRule" id="PRU00102"/>
    </source>
</evidence>
<evidence type="ECO:0000269" key="5">
    <source>
    </source>
</evidence>
<evidence type="ECO:0000269" key="6">
    <source>
    </source>
</evidence>
<evidence type="ECO:0000269" key="7">
    <source>
    </source>
</evidence>
<evidence type="ECO:0000269" key="8">
    <source>
    </source>
</evidence>
<evidence type="ECO:0000269" key="9">
    <source>
    </source>
</evidence>
<evidence type="ECO:0000303" key="10">
    <source>
    </source>
</evidence>
<evidence type="ECO:0000305" key="11"/>
<evidence type="ECO:0000305" key="12">
    <source>
    </source>
</evidence>
<evidence type="ECO:0000305" key="13">
    <source>
    </source>
</evidence>
<reference key="1">
    <citation type="journal article" date="1997" name="DNA Res.">
        <title>Construction of a contiguous 874-kb sequence of the Escherichia coli-K12 genome corresponding to 50.0-68.8 min on the linkage map and analysis of its sequence features.</title>
        <authorList>
            <person name="Yamamoto Y."/>
            <person name="Aiba H."/>
            <person name="Baba T."/>
            <person name="Hayashi K."/>
            <person name="Inada T."/>
            <person name="Isono K."/>
            <person name="Itoh T."/>
            <person name="Kimura S."/>
            <person name="Kitagawa M."/>
            <person name="Makino K."/>
            <person name="Miki T."/>
            <person name="Mitsuhashi N."/>
            <person name="Mizobuchi K."/>
            <person name="Mori H."/>
            <person name="Nakade S."/>
            <person name="Nakamura Y."/>
            <person name="Nashimoto H."/>
            <person name="Oshima T."/>
            <person name="Oyama S."/>
            <person name="Saito N."/>
            <person name="Sampei G."/>
            <person name="Satoh Y."/>
            <person name="Sivasundaram S."/>
            <person name="Tagami H."/>
            <person name="Takahashi H."/>
            <person name="Takeda J."/>
            <person name="Takemoto K."/>
            <person name="Uehara K."/>
            <person name="Wada C."/>
            <person name="Yamagata S."/>
            <person name="Horiuchi T."/>
        </authorList>
    </citation>
    <scope>NUCLEOTIDE SEQUENCE [LARGE SCALE GENOMIC DNA]</scope>
    <source>
        <strain>K12 / W3110 / ATCC 27325 / DSM 5911</strain>
    </source>
</reference>
<reference key="2">
    <citation type="journal article" date="1997" name="Science">
        <title>The complete genome sequence of Escherichia coli K-12.</title>
        <authorList>
            <person name="Blattner F.R."/>
            <person name="Plunkett G. III"/>
            <person name="Bloch C.A."/>
            <person name="Perna N.T."/>
            <person name="Burland V."/>
            <person name="Riley M."/>
            <person name="Collado-Vides J."/>
            <person name="Glasner J.D."/>
            <person name="Rode C.K."/>
            <person name="Mayhew G.F."/>
            <person name="Gregor J."/>
            <person name="Davis N.W."/>
            <person name="Kirkpatrick H.A."/>
            <person name="Goeden M.A."/>
            <person name="Rose D.J."/>
            <person name="Mau B."/>
            <person name="Shao Y."/>
        </authorList>
    </citation>
    <scope>NUCLEOTIDE SEQUENCE [LARGE SCALE GENOMIC DNA]</scope>
    <source>
        <strain>K12 / MG1655 / ATCC 47076</strain>
    </source>
</reference>
<reference key="3">
    <citation type="journal article" date="2006" name="Mol. Syst. Biol.">
        <title>Highly accurate genome sequences of Escherichia coli K-12 strains MG1655 and W3110.</title>
        <authorList>
            <person name="Hayashi K."/>
            <person name="Morooka N."/>
            <person name="Yamamoto Y."/>
            <person name="Fujita K."/>
            <person name="Isono K."/>
            <person name="Choi S."/>
            <person name="Ohtsubo E."/>
            <person name="Baba T."/>
            <person name="Wanner B.L."/>
            <person name="Mori H."/>
            <person name="Horiuchi T."/>
        </authorList>
    </citation>
    <scope>NUCLEOTIDE SEQUENCE [LARGE SCALE GENOMIC DNA]</scope>
    <scope>SEQUENCE REVISION</scope>
    <source>
        <strain>K12 / W3110 / ATCC 27325 / DSM 5911</strain>
    </source>
</reference>
<reference key="4">
    <citation type="journal article" date="1983" name="EMBO J.">
        <title>The nucleotide sequence of an Escherichia coli operon containing genes for the tRNA(m1G)methyltransferase, the ribosomal proteins S16 and L19 and a 21-K polypeptide.</title>
        <authorList>
            <person name="Bystroem A.S."/>
            <person name="Hjalmarsson K.J."/>
            <person name="Wikstroem P.M."/>
            <person name="Bjoerk G.R."/>
        </authorList>
    </citation>
    <scope>NUCLEOTIDE SEQUENCE [GENOMIC DNA] OF 330-408</scope>
</reference>
<reference key="5">
    <citation type="journal article" date="1995" name="Nucleic Acids Res.">
        <title>Detection of new genes in a bacterial genome using Markov models for three gene classes.</title>
        <authorList>
            <person name="Borodovsky M."/>
            <person name="McIninch J."/>
            <person name="Koonin E.V."/>
            <person name="Rudd K.E."/>
            <person name="Medigue C."/>
            <person name="Danchin A."/>
        </authorList>
    </citation>
    <scope>IDENTIFICATION</scope>
</reference>
<reference key="6">
    <citation type="journal article" date="2005" name="Science">
        <title>Global topology analysis of the Escherichia coli inner membrane proteome.</title>
        <authorList>
            <person name="Daley D.O."/>
            <person name="Rapp M."/>
            <person name="Granseth E."/>
            <person name="Melen K."/>
            <person name="Drew D."/>
            <person name="von Heijne G."/>
        </authorList>
    </citation>
    <scope>TOPOLOGY [LARGE SCALE ANALYSIS]</scope>
    <scope>SUBCELLULAR LOCATION</scope>
    <source>
        <strain>K12 / MG1655 / ATCC 47076</strain>
    </source>
</reference>
<reference key="7">
    <citation type="journal article" date="2009" name="Microbiology">
        <title>Gene expression patterns and differential input into curli fimbriae regulation of all GGDEF/EAL domain proteins in Escherichia coli.</title>
        <authorList>
            <person name="Sommerfeldt N."/>
            <person name="Possling A."/>
            <person name="Becker G."/>
            <person name="Pesavento C."/>
            <person name="Tschowri N."/>
            <person name="Hengge R."/>
        </authorList>
    </citation>
    <scope>INDUCTION</scope>
    <source>
        <strain>K12 / W3110 / ATCC 27325 / DSM 5911</strain>
    </source>
</reference>
<reference key="8">
    <citation type="journal article" date="2010" name="Cell">
        <title>Second messenger-mediated adjustment of bacterial swimming velocity.</title>
        <authorList>
            <person name="Boehm A."/>
            <person name="Kaiser M."/>
            <person name="Li H."/>
            <person name="Spangler C."/>
            <person name="Kasper C.A."/>
            <person name="Ackermann M."/>
            <person name="Kaever V."/>
            <person name="Sourjik V."/>
            <person name="Roth V."/>
            <person name="Jenal U."/>
        </authorList>
    </citation>
    <scope>ROLE IN MOTILITY</scope>
    <scope>DISRUPTION PHENOTYPE</scope>
    <source>
        <strain>K12 / MG1655 / ATCC 47076</strain>
    </source>
</reference>
<reference key="9">
    <citation type="journal article" date="2011" name="Appl. Microbiol. Biotechnol.">
        <title>GGDEF proteins YeaI, YedQ, and YfiN reduce early biofilm formation and swimming motility in Escherichia coli.</title>
        <authorList>
            <person name="Sanchez-Torres V."/>
            <person name="Hu H."/>
            <person name="Wood T.K."/>
        </authorList>
    </citation>
    <scope>DISRUPTION PHENOTYPE</scope>
</reference>
<reference key="10">
    <citation type="journal article" date="2015" name="J. Bacteriol.">
        <title>Systematic nomenclature for GGDEF and EAL domain-containing cyclic di-GMP turnover proteins of Escherichia coli.</title>
        <authorList>
            <person name="Hengge R."/>
            <person name="Galperin M.Y."/>
            <person name="Ghigo J.M."/>
            <person name="Gomelsky M."/>
            <person name="Green J."/>
            <person name="Hughes K.T."/>
            <person name="Jenal U."/>
            <person name="Landini P."/>
        </authorList>
    </citation>
    <scope>NOMENCLATURE</scope>
</reference>
<reference key="11">
    <citation type="journal article" date="2016" name="MBio">
        <title>A diguanylate cyclase acts as a cell division inhibitor in a two-step response to reductive and envelope stresses.</title>
        <authorList>
            <person name="Kim H.K."/>
            <person name="Harshey R.M."/>
        </authorList>
    </citation>
    <scope>FUNCTION</scope>
    <scope>CATALYTIC ACTIVITY</scope>
    <scope>ACTIVITY REGULATION</scope>
    <scope>SUBUNIT</scope>
    <scope>INTERACTION WITH FTSZ AND ZIPA</scope>
    <scope>SUBCELLULAR LOCATION</scope>
    <scope>MUTAGENESIS OF 329-ASP-GLU-330</scope>
</reference>
<proteinExistence type="evidence at protein level"/>
<keyword id="KW-0997">Cell inner membrane</keyword>
<keyword id="KW-1003">Cell membrane</keyword>
<keyword id="KW-0342">GTP-binding</keyword>
<keyword id="KW-0460">Magnesium</keyword>
<keyword id="KW-0472">Membrane</keyword>
<keyword id="KW-0479">Metal-binding</keyword>
<keyword id="KW-0547">Nucleotide-binding</keyword>
<keyword id="KW-1185">Reference proteome</keyword>
<keyword id="KW-0346">Stress response</keyword>
<keyword id="KW-0808">Transferase</keyword>
<keyword id="KW-0812">Transmembrane</keyword>
<keyword id="KW-1133">Transmembrane helix</keyword>
<dbReference type="EC" id="2.7.7.65" evidence="9"/>
<dbReference type="EMBL" id="U00096">
    <property type="protein sequence ID" value="AAC75653.1"/>
    <property type="molecule type" value="Genomic_DNA"/>
</dbReference>
<dbReference type="EMBL" id="AP009048">
    <property type="protein sequence ID" value="BAA16489.2"/>
    <property type="molecule type" value="Genomic_DNA"/>
</dbReference>
<dbReference type="EMBL" id="X01818">
    <property type="status" value="NOT_ANNOTATED_CDS"/>
    <property type="molecule type" value="Genomic_DNA"/>
</dbReference>
<dbReference type="PIR" id="G65038">
    <property type="entry name" value="G65038"/>
</dbReference>
<dbReference type="RefSeq" id="NP_417095.1">
    <property type="nucleotide sequence ID" value="NC_000913.3"/>
</dbReference>
<dbReference type="RefSeq" id="WP_000969032.1">
    <property type="nucleotide sequence ID" value="NZ_LN832404.1"/>
</dbReference>
<dbReference type="SMR" id="P46139"/>
<dbReference type="BioGRID" id="4263361">
    <property type="interactions" value="13"/>
</dbReference>
<dbReference type="FunCoup" id="P46139">
    <property type="interactions" value="6"/>
</dbReference>
<dbReference type="STRING" id="511145.b2604"/>
<dbReference type="PaxDb" id="511145-b2604"/>
<dbReference type="EnsemblBacteria" id="AAC75653">
    <property type="protein sequence ID" value="AAC75653"/>
    <property type="gene ID" value="b2604"/>
</dbReference>
<dbReference type="GeneID" id="75205865"/>
<dbReference type="GeneID" id="947091"/>
<dbReference type="KEGG" id="ecj:JW2585"/>
<dbReference type="KEGG" id="eco:b2604"/>
<dbReference type="PATRIC" id="fig|1411691.4.peg.4135"/>
<dbReference type="EchoBASE" id="EB2718"/>
<dbReference type="eggNOG" id="COG2199">
    <property type="taxonomic scope" value="Bacteria"/>
</dbReference>
<dbReference type="HOGENOM" id="CLU_039310_2_0_6"/>
<dbReference type="InParanoid" id="P46139"/>
<dbReference type="OMA" id="RVYADHN"/>
<dbReference type="OrthoDB" id="9812260at2"/>
<dbReference type="PhylomeDB" id="P46139"/>
<dbReference type="BioCyc" id="EcoCyc:EG12880-MONOMER"/>
<dbReference type="BioCyc" id="MetaCyc:EG12880-MONOMER"/>
<dbReference type="BRENDA" id="2.7.7.65">
    <property type="organism ID" value="2026"/>
</dbReference>
<dbReference type="UniPathway" id="UPA00599"/>
<dbReference type="PRO" id="PR:P46139"/>
<dbReference type="Proteomes" id="UP000000625">
    <property type="component" value="Chromosome"/>
</dbReference>
<dbReference type="GO" id="GO:0032153">
    <property type="term" value="C:cell division site"/>
    <property type="evidence" value="ECO:0000314"/>
    <property type="project" value="EcoCyc"/>
</dbReference>
<dbReference type="GO" id="GO:0005886">
    <property type="term" value="C:plasma membrane"/>
    <property type="evidence" value="ECO:0000314"/>
    <property type="project" value="EcoCyc"/>
</dbReference>
<dbReference type="GO" id="GO:0052621">
    <property type="term" value="F:diguanylate cyclase activity"/>
    <property type="evidence" value="ECO:0000314"/>
    <property type="project" value="EcoCyc"/>
</dbReference>
<dbReference type="GO" id="GO:0005525">
    <property type="term" value="F:GTP binding"/>
    <property type="evidence" value="ECO:0007669"/>
    <property type="project" value="UniProtKB-KW"/>
</dbReference>
<dbReference type="GO" id="GO:0042802">
    <property type="term" value="F:identical protein binding"/>
    <property type="evidence" value="ECO:0000314"/>
    <property type="project" value="EcoCyc"/>
</dbReference>
<dbReference type="GO" id="GO:0046872">
    <property type="term" value="F:metal ion binding"/>
    <property type="evidence" value="ECO:0007669"/>
    <property type="project" value="UniProtKB-KW"/>
</dbReference>
<dbReference type="GO" id="GO:0043709">
    <property type="term" value="P:cell adhesion involved in single-species biofilm formation"/>
    <property type="evidence" value="ECO:0000318"/>
    <property type="project" value="GO_Central"/>
</dbReference>
<dbReference type="GO" id="GO:0036460">
    <property type="term" value="P:cellular response to cell envelope stress"/>
    <property type="evidence" value="ECO:0000314"/>
    <property type="project" value="EcoCyc"/>
</dbReference>
<dbReference type="GO" id="GO:1902201">
    <property type="term" value="P:negative regulation of bacterial-type flagellum-dependent cell motility"/>
    <property type="evidence" value="ECO:0000315"/>
    <property type="project" value="EcoCyc"/>
</dbReference>
<dbReference type="GO" id="GO:0007165">
    <property type="term" value="P:signal transduction"/>
    <property type="evidence" value="ECO:0007669"/>
    <property type="project" value="InterPro"/>
</dbReference>
<dbReference type="CDD" id="cd01949">
    <property type="entry name" value="GGDEF"/>
    <property type="match status" value="1"/>
</dbReference>
<dbReference type="FunFam" id="3.30.70.270:FF:000017">
    <property type="entry name" value="Predicted diguanylate cyclase"/>
    <property type="match status" value="1"/>
</dbReference>
<dbReference type="Gene3D" id="3.30.70.270">
    <property type="match status" value="1"/>
</dbReference>
<dbReference type="InterPro" id="IPR033417">
    <property type="entry name" value="CHASE8"/>
</dbReference>
<dbReference type="InterPro" id="IPR052163">
    <property type="entry name" value="DGC-Regulatory_Protein"/>
</dbReference>
<dbReference type="InterPro" id="IPR000160">
    <property type="entry name" value="GGDEF_dom"/>
</dbReference>
<dbReference type="InterPro" id="IPR003660">
    <property type="entry name" value="HAMP_dom"/>
</dbReference>
<dbReference type="InterPro" id="IPR029787">
    <property type="entry name" value="Nucleotide_cyclase"/>
</dbReference>
<dbReference type="InterPro" id="IPR043128">
    <property type="entry name" value="Rev_trsase/Diguanyl_cyclase"/>
</dbReference>
<dbReference type="NCBIfam" id="TIGR00254">
    <property type="entry name" value="GGDEF"/>
    <property type="match status" value="1"/>
</dbReference>
<dbReference type="NCBIfam" id="NF007423">
    <property type="entry name" value="PRK09966.1"/>
    <property type="match status" value="1"/>
</dbReference>
<dbReference type="PANTHER" id="PTHR46663">
    <property type="entry name" value="DIGUANYLATE CYCLASE DGCT-RELATED"/>
    <property type="match status" value="1"/>
</dbReference>
<dbReference type="PANTHER" id="PTHR46663:SF2">
    <property type="entry name" value="GGDEF DOMAIN-CONTAINING PROTEIN"/>
    <property type="match status" value="1"/>
</dbReference>
<dbReference type="Pfam" id="PF17152">
    <property type="entry name" value="CHASE8"/>
    <property type="match status" value="1"/>
</dbReference>
<dbReference type="Pfam" id="PF00990">
    <property type="entry name" value="GGDEF"/>
    <property type="match status" value="1"/>
</dbReference>
<dbReference type="SMART" id="SM00267">
    <property type="entry name" value="GGDEF"/>
    <property type="match status" value="1"/>
</dbReference>
<dbReference type="SUPFAM" id="SSF55073">
    <property type="entry name" value="Nucleotide cyclase"/>
    <property type="match status" value="1"/>
</dbReference>
<dbReference type="PROSITE" id="PS50887">
    <property type="entry name" value="GGDEF"/>
    <property type="match status" value="1"/>
</dbReference>
<dbReference type="PROSITE" id="PS50885">
    <property type="entry name" value="HAMP"/>
    <property type="match status" value="1"/>
</dbReference>
<feature type="chain" id="PRO_0000169270" description="Diguanylate cyclase DgcN">
    <location>
        <begin position="1"/>
        <end position="408"/>
    </location>
</feature>
<feature type="topological domain" description="Cytoplasmic" evidence="12">
    <location>
        <begin position="1"/>
        <end position="24"/>
    </location>
</feature>
<feature type="transmembrane region" description="Helical" evidence="2">
    <location>
        <begin position="25"/>
        <end position="45"/>
    </location>
</feature>
<feature type="topological domain" description="Periplasmic" evidence="12">
    <location>
        <begin position="46"/>
        <end position="52"/>
    </location>
</feature>
<feature type="transmembrane region" description="Helical" evidence="2">
    <location>
        <begin position="53"/>
        <end position="73"/>
    </location>
</feature>
<feature type="topological domain" description="Cytoplasmic" evidence="12">
    <location>
        <begin position="74"/>
        <end position="112"/>
    </location>
</feature>
<feature type="transmembrane region" description="Helical" evidence="2">
    <location>
        <begin position="113"/>
        <end position="133"/>
    </location>
</feature>
<feature type="topological domain" description="Periplasmic" evidence="12">
    <location>
        <begin position="134"/>
        <end position="154"/>
    </location>
</feature>
<feature type="transmembrane region" description="Helical" evidence="2">
    <location>
        <begin position="155"/>
        <end position="175"/>
    </location>
</feature>
<feature type="topological domain" description="Cytoplasmic" evidence="5">
    <location>
        <begin position="176"/>
        <end position="408"/>
    </location>
</feature>
<feature type="domain" description="HAMP" evidence="4">
    <location>
        <begin position="183"/>
        <end position="236"/>
    </location>
</feature>
<feature type="domain" description="GGDEF" evidence="3">
    <location>
        <begin position="278"/>
        <end position="408"/>
    </location>
</feature>
<feature type="active site" description="Proton acceptor" evidence="2">
    <location>
        <position position="329"/>
    </location>
</feature>
<feature type="binding site" evidence="1">
    <location>
        <position position="286"/>
    </location>
    <ligand>
        <name>Mg(2+)</name>
        <dbReference type="ChEBI" id="CHEBI:18420"/>
    </ligand>
</feature>
<feature type="binding site" evidence="1">
    <location>
        <position position="294"/>
    </location>
    <ligand>
        <name>substrate</name>
    </ligand>
</feature>
<feature type="binding site" evidence="1">
    <location>
        <position position="299"/>
    </location>
    <ligand>
        <name>substrate</name>
    </ligand>
</feature>
<feature type="binding site" evidence="1">
    <location>
        <position position="303"/>
    </location>
    <ligand>
        <name>substrate</name>
    </ligand>
</feature>
<feature type="binding site" evidence="1">
    <location>
        <position position="329"/>
    </location>
    <ligand>
        <name>Mg(2+)</name>
        <dbReference type="ChEBI" id="CHEBI:18420"/>
    </ligand>
</feature>
<feature type="site" description="Transition state stabilizer" evidence="2">
    <location>
        <position position="291"/>
    </location>
</feature>
<feature type="mutagenesis site" description="Fails to localize to the midcell when exposed to osmotic upshift." evidence="9">
    <original>DE</original>
    <variation>AA</variation>
    <location>
        <begin position="329"/>
        <end position="330"/>
    </location>
</feature>